<name>SPIKE_IBV6</name>
<dbReference type="EMBL" id="X04723">
    <property type="protein sequence ID" value="CAA28432.1"/>
    <property type="molecule type" value="Genomic_RNA"/>
</dbReference>
<dbReference type="SMR" id="P05135"/>
<dbReference type="GlyCosmos" id="P05135">
    <property type="glycosylation" value="31 sites, No reported glycans"/>
</dbReference>
<dbReference type="GO" id="GO:0044173">
    <property type="term" value="C:host cell endoplasmic reticulum-Golgi intermediate compartment membrane"/>
    <property type="evidence" value="ECO:0007669"/>
    <property type="project" value="UniProtKB-SubCell"/>
</dbReference>
<dbReference type="GO" id="GO:0016020">
    <property type="term" value="C:membrane"/>
    <property type="evidence" value="ECO:0007669"/>
    <property type="project" value="UniProtKB-KW"/>
</dbReference>
<dbReference type="GO" id="GO:0019031">
    <property type="term" value="C:viral envelope"/>
    <property type="evidence" value="ECO:0007669"/>
    <property type="project" value="UniProtKB-KW"/>
</dbReference>
<dbReference type="GO" id="GO:0055036">
    <property type="term" value="C:virion membrane"/>
    <property type="evidence" value="ECO:0007669"/>
    <property type="project" value="UniProtKB-SubCell"/>
</dbReference>
<dbReference type="GO" id="GO:0075509">
    <property type="term" value="P:endocytosis involved in viral entry into host cell"/>
    <property type="evidence" value="ECO:0007669"/>
    <property type="project" value="UniProtKB-KW"/>
</dbReference>
<dbReference type="GO" id="GO:0039654">
    <property type="term" value="P:fusion of virus membrane with host endosome membrane"/>
    <property type="evidence" value="ECO:0007669"/>
    <property type="project" value="UniProtKB-KW"/>
</dbReference>
<dbReference type="GO" id="GO:0019064">
    <property type="term" value="P:fusion of virus membrane with host plasma membrane"/>
    <property type="evidence" value="ECO:0007669"/>
    <property type="project" value="InterPro"/>
</dbReference>
<dbReference type="GO" id="GO:0046813">
    <property type="term" value="P:receptor-mediated virion attachment to host cell"/>
    <property type="evidence" value="ECO:0007669"/>
    <property type="project" value="InterPro"/>
</dbReference>
<dbReference type="CDD" id="cd22372">
    <property type="entry name" value="gammaCoV_Spike_SD1-2_S1-S2_S2"/>
    <property type="match status" value="1"/>
</dbReference>
<dbReference type="FunFam" id="1.20.5.300:FF:000003">
    <property type="entry name" value="Spike glycoprotein"/>
    <property type="match status" value="1"/>
</dbReference>
<dbReference type="Gene3D" id="1.20.5.300">
    <property type="match status" value="2"/>
</dbReference>
<dbReference type="HAMAP" id="MF_04098">
    <property type="entry name" value="GAMMA_CORONA_SPIKE"/>
    <property type="match status" value="1"/>
</dbReference>
<dbReference type="InterPro" id="IPR043607">
    <property type="entry name" value="CoV_S1_C"/>
</dbReference>
<dbReference type="InterPro" id="IPR043473">
    <property type="entry name" value="S2_sf_CoV"/>
</dbReference>
<dbReference type="InterPro" id="IPR002552">
    <property type="entry name" value="Spike_S2_CoV"/>
</dbReference>
<dbReference type="InterPro" id="IPR043614">
    <property type="entry name" value="Spike_S2_CoV_C"/>
</dbReference>
<dbReference type="InterPro" id="IPR044873">
    <property type="entry name" value="Spike_S2_CoV_HR1"/>
</dbReference>
<dbReference type="InterPro" id="IPR044874">
    <property type="entry name" value="Spike_S2_CoV_HR2"/>
</dbReference>
<dbReference type="Pfam" id="PF19209">
    <property type="entry name" value="CoV_S1_C"/>
    <property type="match status" value="1"/>
</dbReference>
<dbReference type="Pfam" id="PF01601">
    <property type="entry name" value="CoV_S2"/>
    <property type="match status" value="1"/>
</dbReference>
<dbReference type="Pfam" id="PF19214">
    <property type="entry name" value="CoV_S2_C"/>
    <property type="match status" value="1"/>
</dbReference>
<dbReference type="SUPFAM" id="SSF111474">
    <property type="entry name" value="Coronavirus S2 glycoprotein"/>
    <property type="match status" value="2"/>
</dbReference>
<dbReference type="PROSITE" id="PS51923">
    <property type="entry name" value="COV_S2_HR1"/>
    <property type="match status" value="1"/>
</dbReference>
<dbReference type="PROSITE" id="PS51924">
    <property type="entry name" value="COV_S2_HR2"/>
    <property type="match status" value="1"/>
</dbReference>
<keyword id="KW-0165">Cleavage on pair of basic residues</keyword>
<keyword id="KW-0175">Coiled coil</keyword>
<keyword id="KW-1170">Fusion of virus membrane with host endosomal membrane</keyword>
<keyword id="KW-1168">Fusion of virus membrane with host membrane</keyword>
<keyword id="KW-0325">Glycoprotein</keyword>
<keyword id="KW-1043">Host membrane</keyword>
<keyword id="KW-0945">Host-virus interaction</keyword>
<keyword id="KW-0472">Membrane</keyword>
<keyword id="KW-0732">Signal</keyword>
<keyword id="KW-0812">Transmembrane</keyword>
<keyword id="KW-1133">Transmembrane helix</keyword>
<keyword id="KW-1161">Viral attachment to host cell</keyword>
<keyword id="KW-0261">Viral envelope protein</keyword>
<keyword id="KW-1162">Viral penetration into host cytoplasm</keyword>
<keyword id="KW-0946">Virion</keyword>
<keyword id="KW-0843">Virulence</keyword>
<keyword id="KW-1164">Virus endocytosis by host</keyword>
<keyword id="KW-1160">Virus entry into host cell</keyword>
<protein>
    <recommendedName>
        <fullName evidence="1">Spike glycoprotein</fullName>
        <shortName evidence="1">S glycoprotein</shortName>
    </recommendedName>
    <alternativeName>
        <fullName evidence="1">E2</fullName>
    </alternativeName>
    <alternativeName>
        <fullName evidence="1">Peplomer protein</fullName>
    </alternativeName>
    <component>
        <recommendedName>
            <fullName evidence="1">Spike protein S1</fullName>
        </recommendedName>
    </component>
    <component>
        <recommendedName>
            <fullName evidence="1">Spike protein S2</fullName>
        </recommendedName>
    </component>
    <component>
        <recommendedName>
            <fullName evidence="1">Spike protein S2'</fullName>
        </recommendedName>
    </component>
</protein>
<proteinExistence type="inferred from homology"/>
<feature type="signal peptide" evidence="1">
    <location>
        <begin position="1"/>
        <end position="18"/>
    </location>
</feature>
<feature type="chain" id="PRO_0000037159" description="Spike glycoprotein" evidence="1">
    <location>
        <begin position="19"/>
        <end position="1163"/>
    </location>
</feature>
<feature type="chain" id="PRO_0000037160" description="Spike protein S1" evidence="1">
    <location>
        <begin position="19"/>
        <end position="538"/>
    </location>
</feature>
<feature type="chain" id="PRO_0000037161" description="Spike protein S2" evidence="1">
    <location>
        <begin position="539"/>
        <end position="1163"/>
    </location>
</feature>
<feature type="chain" id="PRO_0000444091" description="Spike protein S2'" evidence="1">
    <location>
        <begin position="692"/>
        <end position="1163"/>
    </location>
</feature>
<feature type="topological domain" description="Extracellular" evidence="1">
    <location>
        <begin position="19"/>
        <end position="1096"/>
    </location>
</feature>
<feature type="transmembrane region" description="Helical" evidence="1">
    <location>
        <begin position="1097"/>
        <end position="1117"/>
    </location>
</feature>
<feature type="topological domain" description="Cytoplasmic" evidence="1">
    <location>
        <begin position="1118"/>
        <end position="1163"/>
    </location>
</feature>
<feature type="region of interest" description="Heptad repeat 1 (HR1)" evidence="2">
    <location>
        <begin position="770"/>
        <end position="875"/>
    </location>
</feature>
<feature type="region of interest" description="Heptad repeat 2 (HR2)" evidence="3">
    <location>
        <begin position="1025"/>
        <end position="1106"/>
    </location>
</feature>
<feature type="coiled-coil region" evidence="1">
    <location>
        <begin position="823"/>
        <end position="867"/>
    </location>
</feature>
<feature type="coiled-coil region" evidence="1">
    <location>
        <begin position="1056"/>
        <end position="1084"/>
    </location>
</feature>
<feature type="short sequence motif" description="Di-lysine motif" evidence="1">
    <location>
        <begin position="1160"/>
        <end position="1163"/>
    </location>
</feature>
<feature type="site" description="Cleavage; by host furin" evidence="1">
    <location>
        <begin position="538"/>
        <end position="539"/>
    </location>
</feature>
<feature type="site" description="Cleavage; by host furin" evidence="1">
    <location>
        <begin position="691"/>
        <end position="692"/>
    </location>
</feature>
<feature type="glycosylation site" description="N-linked (GlcNAc...) asparagine; by host" evidence="1">
    <location>
        <position position="23"/>
    </location>
</feature>
<feature type="glycosylation site" description="N-linked (GlcNAc...) asparagine; by host" evidence="1">
    <location>
        <position position="51"/>
    </location>
</feature>
<feature type="glycosylation site" description="N-linked (GlcNAc...) asparagine; by host" evidence="1">
    <location>
        <position position="74"/>
    </location>
</feature>
<feature type="glycosylation site" description="N-linked (GlcNAc...) asparagine; by host" evidence="1">
    <location>
        <position position="102"/>
    </location>
</feature>
<feature type="glycosylation site" description="N-linked (GlcNAc...) asparagine; by host" evidence="1">
    <location>
        <position position="139"/>
    </location>
</feature>
<feature type="glycosylation site" description="N-linked (GlcNAc...) asparagine; by host" evidence="1">
    <location>
        <position position="145"/>
    </location>
</feature>
<feature type="glycosylation site" description="N-linked (GlcNAc...) asparagine; by host" evidence="1">
    <location>
        <position position="164"/>
    </location>
</feature>
<feature type="glycosylation site" description="N-linked (GlcNAc...) asparagine; by host" evidence="1">
    <location>
        <position position="179"/>
    </location>
</feature>
<feature type="glycosylation site" description="N-linked (GlcNAc...) asparagine; by host" evidence="1">
    <location>
        <position position="213"/>
    </location>
</feature>
<feature type="glycosylation site" description="N-linked (GlcNAc...) asparagine; by host" evidence="1">
    <location>
        <position position="238"/>
    </location>
</feature>
<feature type="glycosylation site" description="N-linked (GlcNAc...) asparagine; by host" evidence="1">
    <location>
        <position position="248"/>
    </location>
</feature>
<feature type="glycosylation site" description="N-linked (GlcNAc...) asparagine; by host" evidence="1">
    <location>
        <position position="265"/>
    </location>
</feature>
<feature type="glycosylation site" description="N-linked (GlcNAc...) asparagine; by host" evidence="1">
    <location>
        <position position="272"/>
    </location>
</feature>
<feature type="glycosylation site" description="N-linked (GlcNAc...) asparagine; by host" evidence="1">
    <location>
        <position position="277"/>
    </location>
</feature>
<feature type="glycosylation site" description="N-linked (GlcNAc...) asparagine; by host" evidence="1">
    <location>
        <position position="307"/>
    </location>
</feature>
<feature type="glycosylation site" description="N-linked (GlcNAc...) asparagine; by host" evidence="1">
    <location>
        <position position="426"/>
    </location>
</feature>
<feature type="glycosylation site" description="N-linked (GlcNAc...) asparagine; by host" evidence="1">
    <location>
        <position position="448"/>
    </location>
</feature>
<feature type="glycosylation site" description="N-linked (GlcNAc...) asparagine; by host" evidence="1">
    <location>
        <position position="514"/>
    </location>
</feature>
<feature type="glycosylation site" description="N-linked (GlcNAc...) asparagine; by host" evidence="1">
    <location>
        <position position="531"/>
    </location>
</feature>
<feature type="glycosylation site" description="N-linked (GlcNAc...) asparagine; by host" evidence="1">
    <location>
        <position position="543"/>
    </location>
</feature>
<feature type="glycosylation site" description="N-linked (GlcNAc...) asparagine; by host" evidence="1">
    <location>
        <position position="580"/>
    </location>
</feature>
<feature type="glycosylation site" description="N-linked (GlcNAc...) asparagine; by host" evidence="1">
    <location>
        <position position="592"/>
    </location>
</feature>
<feature type="glycosylation site" description="N-linked (GlcNAc...) asparagine; by host" evidence="1">
    <location>
        <position position="670"/>
    </location>
</feature>
<feature type="glycosylation site" description="N-linked (GlcNAc...) asparagine; by host" evidence="1">
    <location>
        <position position="677"/>
    </location>
</feature>
<feature type="glycosylation site" description="N-linked (GlcNAc...) asparagine; by host" evidence="1">
    <location>
        <position position="948"/>
    </location>
</feature>
<feature type="glycosylation site" description="N-linked (GlcNAc...) asparagine; by host" evidence="1">
    <location>
        <position position="961"/>
    </location>
</feature>
<feature type="glycosylation site" description="N-linked (GlcNAc...) asparagine; by host" evidence="1">
    <location>
        <position position="980"/>
    </location>
</feature>
<feature type="glycosylation site" description="N-linked (GlcNAc...) asparagine; by host" evidence="1">
    <location>
        <position position="1015"/>
    </location>
</feature>
<feature type="glycosylation site" description="N-linked (GlcNAc...) asparagine; by host" evidence="1">
    <location>
        <position position="1039"/>
    </location>
</feature>
<feature type="glycosylation site" description="N-linked (GlcNAc...) asparagine; by host" evidence="1">
    <location>
        <position position="1052"/>
    </location>
</feature>
<feature type="glycosylation site" description="N-linked (GlcNAc...) asparagine; by host" evidence="1">
    <location>
        <position position="1075"/>
    </location>
</feature>
<organismHost>
    <name type="scientific">Gallus gallus</name>
    <name type="common">Chicken</name>
    <dbReference type="NCBI Taxonomy" id="9031"/>
</organismHost>
<sequence>MLERSLLLATLLSALCSANLFGNNSYVYYYQSAFRPSDGWHLHGGAYEVVNVSTESSNAGTTGCTAGAIYWSKNFSAASVAMTAPQNGMSWSTEQFCTAHCNFTDFVVFVTHCYKSGHGSCPLTGLIPQNHIRISAMKNSSLFYNLTVAVTKYPRFKSLQCVNNMTSVYLNGDLVFTSNETKDVSAAGVHFKAGGPITYKVMREVKALAYFVNGTAQDVILCDGSPTGLLACQYNTGNFSDGFYPFTNSSLVKEKFIVYRESSVNTTLELTNFTFSNVSNATPNTGGVQTIQLYQTITAQSGYYNLNFSFLSSFIYKASDYMYGSYHPSCKFRLETINNGLWFNSLSVSLGYGPIQGGCKQSVFANRATCCYAYSYNGPSLCKGVYRGELTKSFECGLLVFVTKTDGSRIQTRNEPFTLTQHNYNNITLDRCVEYNIYGRVGQGFITNVTNYAINYNYLADGGMAILDTSGAIDIFVVQGEYGLNYYKVNPCEDVNQQFVVSGGKLVGILTSRNETGSQPLENQFYIKIINGTRRSRRSITGNVTNCPYVTYGKFCIKPDGSISTIVPKELEHFVAPLLNVTENVLIPDSFNLTVTDEYIQTRMDKVQINCLQYVCGNSLECRKLFQQYGPVCDNILSVVNSVGQKEDMELLYFYSSTKPSGFNTPVLSNVSTGEFNISLLLTPPSSASGRSFIEDLLFTSVESVGLPTDDAYKKCTAGPLGFLKDLACAREYNGLLVLPPIITAEMQTLYTSSLVASMAFGGITSAGAIPFATQLQARINHLGITQSLLFKNQEKIAASFNKAIGHMQEGFRSTSLALQQIQDVVNKQSSILTETMASLNKNFGAISSVLQDIYQQLDSIQADAQVDRIITGRLSSLSVLASAKQAEYYRVSQQRELATQKINECVKSQSIRYSFCGNGRHVLTIPQNAPNGIVFIHFTYTPESFVNVTAIVGFCVNPANASQYAIVPANGRGIFIQVNGSYYITARDMYMPRDITAGDIVTLTSCQANYVSVNKTVITTFVDNDDFDFDDELSKWWNDTKHELPDFDEFNYTVPILDIGSEIDRIQGVIQGLNDSLIDLETLSILKTYIKWPWYVWLAIAFLTIIFILVLCWIFFMTGCCGCCCGCFGIIPLMSKCGKKSSYYTTFDNDVVYEQYRPKKSV</sequence>
<organism>
    <name type="scientific">Avian infectious bronchitis virus (strain 6/82)</name>
    <name type="common">IBV</name>
    <dbReference type="NCBI Taxonomy" id="11121"/>
    <lineage>
        <taxon>Viruses</taxon>
        <taxon>Riboviria</taxon>
        <taxon>Orthornavirae</taxon>
        <taxon>Pisuviricota</taxon>
        <taxon>Pisoniviricetes</taxon>
        <taxon>Nidovirales</taxon>
        <taxon>Cornidovirineae</taxon>
        <taxon>Coronaviridae</taxon>
        <taxon>Orthocoronavirinae</taxon>
        <taxon>Gammacoronavirus</taxon>
        <taxon>Igacovirus</taxon>
        <taxon>Avian coronavirus</taxon>
    </lineage>
</organism>
<evidence type="ECO:0000255" key="1">
    <source>
        <dbReference type="HAMAP-Rule" id="MF_04098"/>
    </source>
</evidence>
<evidence type="ECO:0000255" key="2">
    <source>
        <dbReference type="PROSITE-ProRule" id="PRU01271"/>
    </source>
</evidence>
<evidence type="ECO:0000255" key="3">
    <source>
        <dbReference type="PROSITE-ProRule" id="PRU01272"/>
    </source>
</evidence>
<gene>
    <name evidence="1" type="primary">S</name>
    <name type="ORF">2</name>
</gene>
<comment type="function">
    <molecule>Spike protein S1</molecule>
    <text evidence="1">Attaches the virion to the host cell membrane by interacting with sialic acids, initiating the infection.</text>
</comment>
<comment type="function">
    <molecule>Spike protein S2</molecule>
    <text evidence="1">Mediates fusion of the virion and cellular membranes by acting as a class I viral fusion protein. Under the current model, the protein has at least 3 conformational states: pre-fusion native state, pre-hairpin intermediate state, and post-fusion hairpin state. During viral and target cell membrane fusion, the coiled coil regions (heptad repeats) assume a trimer-of-hairpins structure, positioning the fusion peptide in close proximity to the C-terminal region of the ectodomain. The formation of this structure appears to drive apposition and subsequent fusion of viral and target cell membranes.</text>
</comment>
<comment type="function">
    <molecule>Spike protein S2'</molecule>
    <text evidence="1">Acts as a viral fusion peptide after S2 cleavage occurring upon virus endocytosis.</text>
</comment>
<comment type="subunit">
    <text evidence="1">Homotrimer; each monomer consists of a S1 and a S2 subunit. The resulting peplomers protrude from the virus surface as spikes.</text>
</comment>
<comment type="subcellular location">
    <molecule>Spike protein S2</molecule>
    <subcellularLocation>
        <location evidence="1">Virion membrane</location>
        <topology evidence="1">Single-pass type I membrane protein</topology>
    </subcellularLocation>
    <subcellularLocation>
        <location evidence="1">Host endoplasmic reticulum-Golgi intermediate compartment membrane</location>
        <topology evidence="1">Single-pass type I membrane protein</topology>
    </subcellularLocation>
    <text evidence="1">Accumulates in the endoplasmic reticulum-Golgi intermediate compartment, where it participates in virus particle assembly. Some S oligomers may be transported to the plasma membrane, where they may mediate cell-cell fusion.</text>
</comment>
<comment type="subcellular location">
    <molecule>Spike protein S1</molecule>
    <subcellularLocation>
        <location evidence="1">Virion membrane</location>
        <topology evidence="1">Peripheral membrane protein</topology>
    </subcellularLocation>
    <subcellularLocation>
        <location evidence="1">Host endoplasmic reticulum-Golgi intermediate compartment membrane</location>
        <topology evidence="1">Peripheral membrane protein</topology>
    </subcellularLocation>
    <text evidence="1">Accumulates in the endoplasmic reticulum-Golgi intermediate compartment, where it participates in virus particle assembly. Some S oligomers may be transported to the plasma membrane, where they may mediate cell-cell fusion. S1 is not anchored to the viral envelope, but associates with the extravirion surface through its binding to S2.</text>
</comment>
<comment type="domain">
    <text evidence="1">The di-lysine motif confers endoplasmic reticulum localization for type I membrane proteins.</text>
</comment>
<comment type="PTM">
    <text evidence="1">Specific enzymatic cleavages in vivo yield mature proteins. The precursor is processed into S1 and S2 by host cell furin or furin-like protease to yield the mature S1 and S2 proteins. The cleavage site between S1 and S2 requires the optimal sequence [KR]-X-[KR]-R. Additionally, a second cleavage leads to the release of a fusion peptide after viral attachment to host cell receptor.</text>
</comment>
<comment type="similarity">
    <text evidence="1">Belongs to the gammacoronaviruses spike protein family.</text>
</comment>
<accession>P05135</accession>
<reference key="1">
    <citation type="journal article" date="1986" name="J. Gen. Virol.">
        <title>Comparison of the spike precursor sequences of coronavirus IBV strains M41 and 6/82 with that of IBV Beaudette.</title>
        <authorList>
            <person name="Binns M.M."/>
            <person name="Boursnell M.E.G."/>
            <person name="Tomley F.M."/>
            <person name="Brown T.D.K."/>
        </authorList>
    </citation>
    <scope>NUCLEOTIDE SEQUENCE [GENOMIC RNA]</scope>
</reference>